<feature type="chain" id="PRO_0000101698" description="UDP-N-acetylmuramoyl-tripeptide--D-alanyl-D-alanine ligase">
    <location>
        <begin position="1"/>
        <end position="452"/>
    </location>
</feature>
<feature type="binding site" evidence="1">
    <location>
        <begin position="107"/>
        <end position="113"/>
    </location>
    <ligand>
        <name>ATP</name>
        <dbReference type="ChEBI" id="CHEBI:30616"/>
    </ligand>
</feature>
<feature type="sequence variant" description="In murF2; temperature-sensitive mutant with low activity." evidence="3">
    <original>A</original>
    <variation>T</variation>
    <location>
        <position position="288"/>
    </location>
</feature>
<feature type="sequence conflict" description="In Ref. 1 and 3." evidence="6" ref="1 3">
    <original>G</original>
    <variation>A</variation>
    <location>
        <position position="61"/>
    </location>
</feature>
<feature type="sequence conflict" description="In Ref. 1 and 3." evidence="6" ref="1 3">
    <original>A</original>
    <variation>R</variation>
    <location>
        <position position="178"/>
    </location>
</feature>
<feature type="helix" evidence="7">
    <location>
        <begin position="6"/>
        <end position="12"/>
    </location>
</feature>
<feature type="strand" evidence="7">
    <location>
        <begin position="16"/>
        <end position="19"/>
    </location>
</feature>
<feature type="strand" evidence="7">
    <location>
        <begin position="23"/>
        <end position="25"/>
    </location>
</feature>
<feature type="strand" evidence="7">
    <location>
        <begin position="27"/>
        <end position="29"/>
    </location>
</feature>
<feature type="helix" evidence="7">
    <location>
        <begin position="31"/>
        <end position="33"/>
    </location>
</feature>
<feature type="strand" evidence="7">
    <location>
        <begin position="39"/>
        <end position="41"/>
    </location>
</feature>
<feature type="turn" evidence="7">
    <location>
        <begin position="50"/>
        <end position="53"/>
    </location>
</feature>
<feature type="helix" evidence="7">
    <location>
        <begin position="54"/>
        <end position="59"/>
    </location>
</feature>
<feature type="strand" evidence="7">
    <location>
        <begin position="64"/>
        <end position="69"/>
    </location>
</feature>
<feature type="strand" evidence="7">
    <location>
        <begin position="77"/>
        <end position="79"/>
    </location>
</feature>
<feature type="helix" evidence="7">
    <location>
        <begin position="83"/>
        <end position="97"/>
    </location>
</feature>
<feature type="strand" evidence="7">
    <location>
        <begin position="101"/>
        <end position="106"/>
    </location>
</feature>
<feature type="helix" evidence="7">
    <location>
        <begin position="111"/>
        <end position="122"/>
    </location>
</feature>
<feature type="turn" evidence="7">
    <location>
        <begin position="123"/>
        <end position="125"/>
    </location>
</feature>
<feature type="strand" evidence="7">
    <location>
        <begin position="128"/>
        <end position="130"/>
    </location>
</feature>
<feature type="helix" evidence="7">
    <location>
        <begin position="140"/>
        <end position="145"/>
    </location>
</feature>
<feature type="strand" evidence="7">
    <location>
        <begin position="153"/>
        <end position="158"/>
    </location>
</feature>
<feature type="strand" evidence="7">
    <location>
        <begin position="162"/>
        <end position="165"/>
    </location>
</feature>
<feature type="helix" evidence="7">
    <location>
        <begin position="166"/>
        <end position="174"/>
    </location>
</feature>
<feature type="strand" evidence="7">
    <location>
        <begin position="177"/>
        <end position="181"/>
    </location>
</feature>
<feature type="helix" evidence="7">
    <location>
        <begin position="195"/>
        <end position="203"/>
    </location>
</feature>
<feature type="helix" evidence="7">
    <location>
        <begin position="204"/>
        <end position="208"/>
    </location>
</feature>
<feature type="strand" evidence="7">
    <location>
        <begin position="214"/>
        <end position="218"/>
    </location>
</feature>
<feature type="helix" evidence="7">
    <location>
        <begin position="224"/>
        <end position="231"/>
    </location>
</feature>
<feature type="strand" evidence="7">
    <location>
        <begin position="234"/>
        <end position="239"/>
    </location>
</feature>
<feature type="strand" evidence="7">
    <location>
        <begin position="247"/>
        <end position="255"/>
    </location>
</feature>
<feature type="strand" evidence="7">
    <location>
        <begin position="257"/>
        <end position="266"/>
    </location>
</feature>
<feature type="strand" evidence="7">
    <location>
        <begin position="269"/>
        <end position="275"/>
    </location>
</feature>
<feature type="strand" evidence="7">
    <location>
        <begin position="277"/>
        <end position="279"/>
    </location>
</feature>
<feature type="helix" evidence="7">
    <location>
        <begin position="281"/>
        <end position="295"/>
    </location>
</feature>
<feature type="helix" evidence="7">
    <location>
        <begin position="300"/>
        <end position="307"/>
    </location>
</feature>
<feature type="strand" evidence="7">
    <location>
        <begin position="316"/>
        <end position="323"/>
    </location>
</feature>
<feature type="strand" evidence="7">
    <location>
        <begin position="326"/>
        <end position="330"/>
    </location>
</feature>
<feature type="helix" evidence="7">
    <location>
        <begin position="337"/>
        <end position="349"/>
    </location>
</feature>
<feature type="strand" evidence="7">
    <location>
        <begin position="350"/>
        <end position="358"/>
    </location>
</feature>
<feature type="helix" evidence="7">
    <location>
        <begin position="367"/>
        <end position="382"/>
    </location>
</feature>
<feature type="strand" evidence="7">
    <location>
        <begin position="385"/>
        <end position="393"/>
    </location>
</feature>
<feature type="helix" evidence="7">
    <location>
        <begin position="395"/>
        <end position="400"/>
    </location>
</feature>
<feature type="strand" evidence="7">
    <location>
        <begin position="405"/>
        <end position="409"/>
    </location>
</feature>
<feature type="helix" evidence="7">
    <location>
        <begin position="410"/>
        <end position="423"/>
    </location>
</feature>
<feature type="strand" evidence="7">
    <location>
        <begin position="425"/>
        <end position="432"/>
    </location>
</feature>
<feature type="helix" evidence="7">
    <location>
        <begin position="435"/>
        <end position="437"/>
    </location>
</feature>
<feature type="helix" evidence="7">
    <location>
        <begin position="440"/>
        <end position="446"/>
    </location>
</feature>
<protein>
    <recommendedName>
        <fullName evidence="1 6">UDP-N-acetylmuramoyl-tripeptide--D-alanyl-D-alanine ligase</fullName>
        <ecNumber evidence="1 2">6.3.2.10</ecNumber>
    </recommendedName>
    <alternativeName>
        <fullName evidence="1 4">D-alanyl-D-alanine-adding enzyme</fullName>
    </alternativeName>
    <alternativeName>
        <fullName evidence="5">UDP-MurNAc-pentapeptide synthetase</fullName>
    </alternativeName>
</protein>
<sequence>MISVTLSQLTDILNGELQGADITLDAVTTDTRKLTPGCLFVALKGERFDAHDFADQAKAGGAGALLVSRPLDIDLPQLIVKDTRLAFGELAAWVRQQVPARVVALTGSSGKTSVKEMTAAILSQCGNTLYTAGNLNNDIGVPMTLLRLTPEYDYAVIELGANHQGEIAWTVSLTRPEAALVNNLAAAHLEGFGSLAGVAKAKGEIFSGLPENGIAIMNADNNDWLNWQSVIGSRKVWRFSPNAANSDFTATNIHVTSHGTEFTLQTPTGSVDVLLPLPGRHNIANALAAAALSMSVGATLDAIKAGLANLKAVPGRLFPIQLAENQLLLDDSYNANVGSMTAAVQVLAEMPGYRVLVVGDMAELGAESEACHVQVGEAAKAAGIDRVLSVGKQSHAISTASGVGEHFADKTALITRLKLLIAEQQVITILVKGSRSAAMEEVVRALQENGTC</sequence>
<gene>
    <name evidence="1 5" type="primary">murF</name>
    <name type="synonym">mra</name>
    <name type="ordered locus">b0086</name>
    <name type="ordered locus">JW0084</name>
</gene>
<accession>P11880</accession>
<accession>O07100</accession>
<accession>P77636</accession>
<organism>
    <name type="scientific">Escherichia coli (strain K12)</name>
    <dbReference type="NCBI Taxonomy" id="83333"/>
    <lineage>
        <taxon>Bacteria</taxon>
        <taxon>Pseudomonadati</taxon>
        <taxon>Pseudomonadota</taxon>
        <taxon>Gammaproteobacteria</taxon>
        <taxon>Enterobacterales</taxon>
        <taxon>Enterobacteriaceae</taxon>
        <taxon>Escherichia</taxon>
    </lineage>
</organism>
<name>MURF_ECOLI</name>
<dbReference type="EC" id="6.3.2.10" evidence="1 2"/>
<dbReference type="EMBL" id="X15432">
    <property type="protein sequence ID" value="CAA33473.1"/>
    <property type="molecule type" value="Genomic_DNA"/>
</dbReference>
<dbReference type="EMBL" id="X55034">
    <property type="protein sequence ID" value="CAA38863.1"/>
    <property type="molecule type" value="Genomic_DNA"/>
</dbReference>
<dbReference type="EMBL" id="U67891">
    <property type="protein sequence ID" value="AAC44657.1"/>
    <property type="molecule type" value="Genomic_DNA"/>
</dbReference>
<dbReference type="EMBL" id="U00096">
    <property type="protein sequence ID" value="AAC73197.1"/>
    <property type="molecule type" value="Genomic_DNA"/>
</dbReference>
<dbReference type="EMBL" id="AP009048">
    <property type="protein sequence ID" value="BAB96654.2"/>
    <property type="molecule type" value="Genomic_DNA"/>
</dbReference>
<dbReference type="EMBL" id="U67893">
    <property type="protein sequence ID" value="AAB60788.1"/>
    <property type="molecule type" value="Genomic_DNA"/>
</dbReference>
<dbReference type="PIR" id="F64730">
    <property type="entry name" value="F64730"/>
</dbReference>
<dbReference type="RefSeq" id="NP_414628.1">
    <property type="nucleotide sequence ID" value="NC_000913.3"/>
</dbReference>
<dbReference type="RefSeq" id="WP_000626685.1">
    <property type="nucleotide sequence ID" value="NZ_LN832404.1"/>
</dbReference>
<dbReference type="PDB" id="1GG4">
    <property type="method" value="X-ray"/>
    <property type="resolution" value="2.30 A"/>
    <property type="chains" value="A/B=1-452"/>
</dbReference>
<dbReference type="PDBsum" id="1GG4"/>
<dbReference type="SMR" id="P11880"/>
<dbReference type="BioGRID" id="4261642">
    <property type="interactions" value="422"/>
</dbReference>
<dbReference type="BioGRID" id="849214">
    <property type="interactions" value="1"/>
</dbReference>
<dbReference type="DIP" id="DIP-10281N"/>
<dbReference type="FunCoup" id="P11880">
    <property type="interactions" value="534"/>
</dbReference>
<dbReference type="IntAct" id="P11880">
    <property type="interactions" value="11"/>
</dbReference>
<dbReference type="STRING" id="511145.b0086"/>
<dbReference type="BindingDB" id="P11880"/>
<dbReference type="ChEMBL" id="CHEMBL2540"/>
<dbReference type="jPOST" id="P11880"/>
<dbReference type="PaxDb" id="511145-b0086"/>
<dbReference type="EnsemblBacteria" id="AAC73197">
    <property type="protein sequence ID" value="AAC73197"/>
    <property type="gene ID" value="b0086"/>
</dbReference>
<dbReference type="GeneID" id="944813"/>
<dbReference type="KEGG" id="ecj:JW0084"/>
<dbReference type="KEGG" id="eco:b0086"/>
<dbReference type="KEGG" id="ecoc:C3026_00335"/>
<dbReference type="PATRIC" id="fig|1411691.4.peg.2194"/>
<dbReference type="EchoBASE" id="EB0617"/>
<dbReference type="eggNOG" id="COG0770">
    <property type="taxonomic scope" value="Bacteria"/>
</dbReference>
<dbReference type="HOGENOM" id="CLU_031507_4_0_6"/>
<dbReference type="InParanoid" id="P11880"/>
<dbReference type="OMA" id="LYGEHHV"/>
<dbReference type="OrthoDB" id="9801978at2"/>
<dbReference type="PhylomeDB" id="P11880"/>
<dbReference type="BioCyc" id="EcoCyc:UDP-NACMURALGLDAPAALIG-MONOMER"/>
<dbReference type="BioCyc" id="MetaCyc:UDP-NACMURALGLDAPAALIG-MONOMER"/>
<dbReference type="BRENDA" id="6.3.2.10">
    <property type="organism ID" value="2026"/>
</dbReference>
<dbReference type="BRENDA" id="6.3.2.8">
    <property type="organism ID" value="2026"/>
</dbReference>
<dbReference type="SABIO-RK" id="P11880"/>
<dbReference type="UniPathway" id="UPA00219"/>
<dbReference type="EvolutionaryTrace" id="P11880"/>
<dbReference type="PRO" id="PR:P11880"/>
<dbReference type="Proteomes" id="UP000000625">
    <property type="component" value="Chromosome"/>
</dbReference>
<dbReference type="GO" id="GO:0005829">
    <property type="term" value="C:cytosol"/>
    <property type="evidence" value="ECO:0000314"/>
    <property type="project" value="EcoCyc"/>
</dbReference>
<dbReference type="GO" id="GO:0005524">
    <property type="term" value="F:ATP binding"/>
    <property type="evidence" value="ECO:0007669"/>
    <property type="project" value="UniProtKB-UniRule"/>
</dbReference>
<dbReference type="GO" id="GO:0047480">
    <property type="term" value="F:UDP-N-acetylmuramoyl-tripeptide-D-alanyl-D-alanine ligase activity"/>
    <property type="evidence" value="ECO:0000314"/>
    <property type="project" value="EcoCyc"/>
</dbReference>
<dbReference type="GO" id="GO:0008766">
    <property type="term" value="F:UDP-N-acetylmuramoylalanyl-D-glutamyl-2,6-diaminopimelate-D-alanyl-D-alanine ligase activity"/>
    <property type="evidence" value="ECO:0000314"/>
    <property type="project" value="EcoCyc"/>
</dbReference>
<dbReference type="GO" id="GO:0051301">
    <property type="term" value="P:cell division"/>
    <property type="evidence" value="ECO:0007669"/>
    <property type="project" value="UniProtKB-KW"/>
</dbReference>
<dbReference type="GO" id="GO:0071555">
    <property type="term" value="P:cell wall organization"/>
    <property type="evidence" value="ECO:0007669"/>
    <property type="project" value="UniProtKB-KW"/>
</dbReference>
<dbReference type="GO" id="GO:0009252">
    <property type="term" value="P:peptidoglycan biosynthetic process"/>
    <property type="evidence" value="ECO:0000315"/>
    <property type="project" value="EcoCyc"/>
</dbReference>
<dbReference type="GO" id="GO:0008360">
    <property type="term" value="P:regulation of cell shape"/>
    <property type="evidence" value="ECO:0007669"/>
    <property type="project" value="UniProtKB-KW"/>
</dbReference>
<dbReference type="FunFam" id="3.40.1190.10:FF:000007">
    <property type="entry name" value="UDP-N-acetylmuramoyl-tripeptide--D-alanyl-D-alanine ligase"/>
    <property type="match status" value="1"/>
</dbReference>
<dbReference type="FunFam" id="3.40.1390.10:FF:000004">
    <property type="entry name" value="UDP-N-acetylmuramoyl-tripeptide--D-alanyl-D-alanine ligase"/>
    <property type="match status" value="1"/>
</dbReference>
<dbReference type="FunFam" id="3.90.190.20:FF:000008">
    <property type="entry name" value="UDP-N-acetylmuramoyl-tripeptide--D-alanyl-D-alanine ligase"/>
    <property type="match status" value="1"/>
</dbReference>
<dbReference type="Gene3D" id="3.90.190.20">
    <property type="entry name" value="Mur ligase, C-terminal domain"/>
    <property type="match status" value="1"/>
</dbReference>
<dbReference type="Gene3D" id="3.40.1190.10">
    <property type="entry name" value="Mur-like, catalytic domain"/>
    <property type="match status" value="1"/>
</dbReference>
<dbReference type="Gene3D" id="3.40.1390.10">
    <property type="entry name" value="MurE/MurF, N-terminal domain"/>
    <property type="match status" value="1"/>
</dbReference>
<dbReference type="HAMAP" id="MF_02019">
    <property type="entry name" value="MurF"/>
    <property type="match status" value="1"/>
</dbReference>
<dbReference type="InterPro" id="IPR036565">
    <property type="entry name" value="Mur-like_cat_sf"/>
</dbReference>
<dbReference type="InterPro" id="IPR004101">
    <property type="entry name" value="Mur_ligase_C"/>
</dbReference>
<dbReference type="InterPro" id="IPR036615">
    <property type="entry name" value="Mur_ligase_C_dom_sf"/>
</dbReference>
<dbReference type="InterPro" id="IPR013221">
    <property type="entry name" value="Mur_ligase_cen"/>
</dbReference>
<dbReference type="InterPro" id="IPR000713">
    <property type="entry name" value="Mur_ligase_N"/>
</dbReference>
<dbReference type="InterPro" id="IPR051046">
    <property type="entry name" value="MurCDEF_CellWall_CoF430Synth"/>
</dbReference>
<dbReference type="InterPro" id="IPR035911">
    <property type="entry name" value="MurE/MurF_N"/>
</dbReference>
<dbReference type="InterPro" id="IPR005863">
    <property type="entry name" value="UDP-N-AcMur_synth"/>
</dbReference>
<dbReference type="NCBIfam" id="TIGR01143">
    <property type="entry name" value="murF"/>
    <property type="match status" value="1"/>
</dbReference>
<dbReference type="NCBIfam" id="NF008041">
    <property type="entry name" value="PRK10773.1"/>
    <property type="match status" value="1"/>
</dbReference>
<dbReference type="PANTHER" id="PTHR43024">
    <property type="entry name" value="UDP-N-ACETYLMURAMOYL-TRIPEPTIDE--D-ALANYL-D-ALANINE LIGASE"/>
    <property type="match status" value="1"/>
</dbReference>
<dbReference type="PANTHER" id="PTHR43024:SF1">
    <property type="entry name" value="UDP-N-ACETYLMURAMOYL-TRIPEPTIDE--D-ALANYL-D-ALANINE LIGASE"/>
    <property type="match status" value="1"/>
</dbReference>
<dbReference type="Pfam" id="PF01225">
    <property type="entry name" value="Mur_ligase"/>
    <property type="match status" value="1"/>
</dbReference>
<dbReference type="Pfam" id="PF02875">
    <property type="entry name" value="Mur_ligase_C"/>
    <property type="match status" value="1"/>
</dbReference>
<dbReference type="Pfam" id="PF08245">
    <property type="entry name" value="Mur_ligase_M"/>
    <property type="match status" value="1"/>
</dbReference>
<dbReference type="SUPFAM" id="SSF53623">
    <property type="entry name" value="MurD-like peptide ligases, catalytic domain"/>
    <property type="match status" value="1"/>
</dbReference>
<dbReference type="SUPFAM" id="SSF53244">
    <property type="entry name" value="MurD-like peptide ligases, peptide-binding domain"/>
    <property type="match status" value="1"/>
</dbReference>
<dbReference type="SUPFAM" id="SSF63418">
    <property type="entry name" value="MurE/MurF N-terminal domain"/>
    <property type="match status" value="1"/>
</dbReference>
<proteinExistence type="evidence at protein level"/>
<evidence type="ECO:0000255" key="1">
    <source>
        <dbReference type="HAMAP-Rule" id="MF_02019"/>
    </source>
</evidence>
<evidence type="ECO:0000269" key="2">
    <source>
    </source>
</evidence>
<evidence type="ECO:0000269" key="3">
    <source>
    </source>
</evidence>
<evidence type="ECO:0000303" key="4">
    <source>
    </source>
</evidence>
<evidence type="ECO:0000303" key="5">
    <source>
    </source>
</evidence>
<evidence type="ECO:0000305" key="6"/>
<evidence type="ECO:0007829" key="7">
    <source>
        <dbReference type="PDB" id="1GG4"/>
    </source>
</evidence>
<reference key="1">
    <citation type="journal article" date="1989" name="Nucleic Acids Res.">
        <title>Nucleotide sequence of the murF gene encoding the UDP-MurNAc-pentapeptide synthetase of Escherichia coli.</title>
        <authorList>
            <person name="Parquet C."/>
            <person name="Flouret B."/>
            <person name="Mengin-Lecreulx D."/>
            <person name="van Heijenoort J."/>
        </authorList>
    </citation>
    <scope>NUCLEOTIDE SEQUENCE [GENOMIC DNA]</scope>
    <source>
        <strain>K12</strain>
    </source>
</reference>
<reference key="2">
    <citation type="journal article" date="1996" name="Biochemistry">
        <title>Kinetic mechanism of the Escherichia coli UDPMurNAc-tripeptide D-alanyl-D-alanine-adding enzyme: use of a glutathione S-transferase fusion.</title>
        <authorList>
            <person name="Anderson M.S."/>
            <person name="Eveland S.S."/>
            <person name="Onishi H.R."/>
            <person name="Pompliano D.L."/>
        </authorList>
    </citation>
    <scope>NUCLEOTIDE SEQUENCE [GENOMIC DNA]</scope>
    <source>
        <strain>K12 / MB2884</strain>
    </source>
</reference>
<reference key="3">
    <citation type="journal article" date="1992" name="Nucleic Acids Res.">
        <title>Systematic sequencing of the Escherichia coli genome: analysis of the 0-2.4 min region.</title>
        <authorList>
            <person name="Yura T."/>
            <person name="Mori H."/>
            <person name="Nagai H."/>
            <person name="Nagata T."/>
            <person name="Ishihama A."/>
            <person name="Fujita N."/>
            <person name="Isono K."/>
            <person name="Mizobuchi K."/>
            <person name="Nakata A."/>
        </authorList>
    </citation>
    <scope>NUCLEOTIDE SEQUENCE [LARGE SCALE GENOMIC DNA]</scope>
    <source>
        <strain>K12</strain>
    </source>
</reference>
<reference key="4">
    <citation type="journal article" date="1997" name="Science">
        <title>The complete genome sequence of Escherichia coli K-12.</title>
        <authorList>
            <person name="Blattner F.R."/>
            <person name="Plunkett G. III"/>
            <person name="Bloch C.A."/>
            <person name="Perna N.T."/>
            <person name="Burland V."/>
            <person name="Riley M."/>
            <person name="Collado-Vides J."/>
            <person name="Glasner J.D."/>
            <person name="Rode C.K."/>
            <person name="Mayhew G.F."/>
            <person name="Gregor J."/>
            <person name="Davis N.W."/>
            <person name="Kirkpatrick H.A."/>
            <person name="Goeden M.A."/>
            <person name="Rose D.J."/>
            <person name="Mau B."/>
            <person name="Shao Y."/>
        </authorList>
    </citation>
    <scope>NUCLEOTIDE SEQUENCE [LARGE SCALE GENOMIC DNA]</scope>
    <source>
        <strain>K12 / MG1655 / ATCC 47076</strain>
    </source>
</reference>
<reference key="5">
    <citation type="journal article" date="2006" name="Mol. Syst. Biol.">
        <title>Highly accurate genome sequences of Escherichia coli K-12 strains MG1655 and W3110.</title>
        <authorList>
            <person name="Hayashi K."/>
            <person name="Morooka N."/>
            <person name="Yamamoto Y."/>
            <person name="Fujita K."/>
            <person name="Isono K."/>
            <person name="Choi S."/>
            <person name="Ohtsubo E."/>
            <person name="Baba T."/>
            <person name="Wanner B.L."/>
            <person name="Mori H."/>
            <person name="Horiuchi T."/>
        </authorList>
    </citation>
    <scope>NUCLEOTIDE SEQUENCE [LARGE SCALE GENOMIC DNA]</scope>
    <scope>SEQUENCE REVISION TO 61 AND 178</scope>
    <source>
        <strain>K12 / W3110 / ATCC 27325 / DSM 5911</strain>
    </source>
</reference>
<reference key="6">
    <citation type="journal article" date="1997" name="Biochemistry">
        <title>Conditionally lethal Escherichia coli murein mutants contain point defects that map to regions conserved among murein and folyl poly-gamma-glutamate ligases: identification of a ligase superfamily.</title>
        <authorList>
            <person name="Eveland S.S."/>
            <person name="Pompliano D.L."/>
            <person name="Anderson M.S."/>
        </authorList>
    </citation>
    <scope>NUCLEOTIDE SEQUENCE [GENOMIC DNA]</scope>
    <scope>MUTANT MURF2</scope>
    <source>
        <strain>CGSC 5990</strain>
    </source>
</reference>
<reference key="7">
    <citation type="journal article" date="1990" name="Biochemistry">
        <title>Purification and characterization of the D-alanyl-D-alanine-adding enzyme from Escherichia coli.</title>
        <authorList>
            <person name="Duncan K."/>
            <person name="van Heijenoort J."/>
            <person name="Walsh C.T."/>
        </authorList>
    </citation>
    <scope>PROTEIN SEQUENCE OF 1-15</scope>
    <scope>FUNCTION</scope>
    <scope>CATALYTIC ACTIVITY</scope>
    <scope>PATHWAY</scope>
    <scope>SUBUNIT</scope>
    <scope>SUBCELLULAR LOCATION</scope>
</reference>
<reference key="8">
    <citation type="journal article" date="2000" name="J. Mol. Biol.">
        <title>Crystal structure of Escherichia coli UDPMurNAc-tripeptide D-alanyl-D-alanine-adding enzyme (MurF) at 2.3-A resolution.</title>
        <authorList>
            <person name="Yan Y."/>
            <person name="Munshi S."/>
            <person name="Leiting B."/>
            <person name="Anderson M.S."/>
            <person name="Chrzas J."/>
            <person name="Chen Z."/>
        </authorList>
    </citation>
    <scope>X-RAY CRYSTALLOGRAPHY (2.3 ANGSTROMS)</scope>
</reference>
<keyword id="KW-0002">3D-structure</keyword>
<keyword id="KW-0067">ATP-binding</keyword>
<keyword id="KW-0131">Cell cycle</keyword>
<keyword id="KW-0132">Cell division</keyword>
<keyword id="KW-0133">Cell shape</keyword>
<keyword id="KW-0961">Cell wall biogenesis/degradation</keyword>
<keyword id="KW-0963">Cytoplasm</keyword>
<keyword id="KW-0903">Direct protein sequencing</keyword>
<keyword id="KW-0436">Ligase</keyword>
<keyword id="KW-0547">Nucleotide-binding</keyword>
<keyword id="KW-0573">Peptidoglycan synthesis</keyword>
<keyword id="KW-1185">Reference proteome</keyword>
<comment type="function">
    <text evidence="1 2">Involved in cell wall formation. Catalyzes the final step in the synthesis of UDP-N-acetylmuramoyl-pentapeptide, the precursor of murein.</text>
</comment>
<comment type="catalytic activity">
    <reaction evidence="1 2">
        <text>D-alanyl-D-alanine + UDP-N-acetyl-alpha-D-muramoyl-L-alanyl-gamma-D-glutamyl-meso-2,6-diaminopimelate + ATP = UDP-N-acetyl-alpha-D-muramoyl-L-alanyl-gamma-D-glutamyl-meso-2,6-diaminopimeloyl-D-alanyl-D-alanine + ADP + phosphate + H(+)</text>
        <dbReference type="Rhea" id="RHEA:28374"/>
        <dbReference type="ChEBI" id="CHEBI:15378"/>
        <dbReference type="ChEBI" id="CHEBI:30616"/>
        <dbReference type="ChEBI" id="CHEBI:43474"/>
        <dbReference type="ChEBI" id="CHEBI:57822"/>
        <dbReference type="ChEBI" id="CHEBI:61386"/>
        <dbReference type="ChEBI" id="CHEBI:83905"/>
        <dbReference type="ChEBI" id="CHEBI:456216"/>
        <dbReference type="EC" id="6.3.2.10"/>
    </reaction>
</comment>
<comment type="pathway">
    <text evidence="1 2">Cell wall biogenesis; peptidoglycan biosynthesis.</text>
</comment>
<comment type="subunit">
    <text evidence="2">Monomer.</text>
</comment>
<comment type="subcellular location">
    <subcellularLocation>
        <location evidence="1 2">Cytoplasm</location>
    </subcellularLocation>
</comment>
<comment type="similarity">
    <text evidence="1 6">Belongs to the MurCDEF family. MurF subfamily.</text>
</comment>